<proteinExistence type="inferred from homology"/>
<sequence length="538" mass="62933">MEIKEISVPLQGVVADYMNGKKEIQSCFDYLLTEDAFKQRLHDLREREFFRQDLVTHLLEYNTQLQAGEFTIQNIKALEDENTYVVIAGQQAGLLTGPLYTVHKIISILQLAKEKEESLGVRVVPVFWIAGEDHDMDEINHTFVTKNKKIKKTIFHDRYPKKASASESEFSIEDCRKWVEEIFKTYPETNFTKDVLQFVDDALGKSHTYVDFFAHLITKMFANSGLILVDSHHPALRKLEVPFLQQIISKYKEIQVGLRNQQEVLKELGFKPIIETKTNAVHIFMEIDNERVLLEENQGKFIGKDGVHSFSYEELMEEMERSPERFSNNVVTRPLMQEYVFPTLAFIGGPGELAYWSELQQVFHTAGFQMPPVVPRLTITYMERDTATDLYDLDLQEIDPFLNNIDNLRDNWLSNQIEEPIDERFIEAKKEIMDIHTSLQQFVKKIDPGLNEFAGKNELKINEQIELLEKMLKRNVEKKHEVQLNKFRRLQFALRPLGAPQERVWNVCYYLNQFGLDFVDRVMEQSFSWDGKHHVIKL</sequence>
<gene>
    <name evidence="1" type="primary">bshC</name>
    <name type="ordered locus">BcerKBAB4_3746</name>
</gene>
<evidence type="ECO:0000255" key="1">
    <source>
        <dbReference type="HAMAP-Rule" id="MF_01867"/>
    </source>
</evidence>
<accession>A9VU81</accession>
<name>BSHC_BACMK</name>
<organism>
    <name type="scientific">Bacillus mycoides (strain KBAB4)</name>
    <name type="common">Bacillus weihenstephanensis</name>
    <dbReference type="NCBI Taxonomy" id="315730"/>
    <lineage>
        <taxon>Bacteria</taxon>
        <taxon>Bacillati</taxon>
        <taxon>Bacillota</taxon>
        <taxon>Bacilli</taxon>
        <taxon>Bacillales</taxon>
        <taxon>Bacillaceae</taxon>
        <taxon>Bacillus</taxon>
        <taxon>Bacillus cereus group</taxon>
    </lineage>
</organism>
<keyword id="KW-0175">Coiled coil</keyword>
<keyword id="KW-0436">Ligase</keyword>
<feature type="chain" id="PRO_0000378223" description="Putative cysteine ligase BshC">
    <location>
        <begin position="1"/>
        <end position="538"/>
    </location>
</feature>
<feature type="coiled-coil region" evidence="1">
    <location>
        <begin position="460"/>
        <end position="483"/>
    </location>
</feature>
<dbReference type="EC" id="6.-.-.-" evidence="1"/>
<dbReference type="EMBL" id="CP000903">
    <property type="protein sequence ID" value="ABY44915.1"/>
    <property type="molecule type" value="Genomic_DNA"/>
</dbReference>
<dbReference type="RefSeq" id="WP_012261611.1">
    <property type="nucleotide sequence ID" value="NC_010184.1"/>
</dbReference>
<dbReference type="SMR" id="A9VU81"/>
<dbReference type="KEGG" id="bwe:BcerKBAB4_3746"/>
<dbReference type="eggNOG" id="COG4365">
    <property type="taxonomic scope" value="Bacteria"/>
</dbReference>
<dbReference type="HOGENOM" id="CLU_022249_1_0_9"/>
<dbReference type="Proteomes" id="UP000002154">
    <property type="component" value="Chromosome"/>
</dbReference>
<dbReference type="GO" id="GO:0016874">
    <property type="term" value="F:ligase activity"/>
    <property type="evidence" value="ECO:0007669"/>
    <property type="project" value="UniProtKB-UniRule"/>
</dbReference>
<dbReference type="HAMAP" id="MF_01867">
    <property type="entry name" value="BshC"/>
    <property type="match status" value="1"/>
</dbReference>
<dbReference type="InterPro" id="IPR011199">
    <property type="entry name" value="Bacillithiol_biosynth_BshC"/>
</dbReference>
<dbReference type="InterPro" id="IPR055399">
    <property type="entry name" value="CC_BshC"/>
</dbReference>
<dbReference type="InterPro" id="IPR055398">
    <property type="entry name" value="Rossmann-like_BshC"/>
</dbReference>
<dbReference type="NCBIfam" id="TIGR03998">
    <property type="entry name" value="thiol_BshC"/>
    <property type="match status" value="1"/>
</dbReference>
<dbReference type="Pfam" id="PF24850">
    <property type="entry name" value="CC_BshC"/>
    <property type="match status" value="1"/>
</dbReference>
<dbReference type="Pfam" id="PF10079">
    <property type="entry name" value="Rossmann-like_BshC"/>
    <property type="match status" value="1"/>
</dbReference>
<dbReference type="PIRSF" id="PIRSF012535">
    <property type="entry name" value="UCP012535"/>
    <property type="match status" value="1"/>
</dbReference>
<comment type="function">
    <text evidence="1">Involved in bacillithiol (BSH) biosynthesis. May catalyze the last step of the pathway, the addition of cysteine to glucosamine malate (GlcN-Mal) to generate BSH.</text>
</comment>
<comment type="similarity">
    <text evidence="1">Belongs to the BshC family.</text>
</comment>
<reference key="1">
    <citation type="journal article" date="2008" name="Chem. Biol. Interact.">
        <title>Extending the Bacillus cereus group genomics to putative food-borne pathogens of different toxicity.</title>
        <authorList>
            <person name="Lapidus A."/>
            <person name="Goltsman E."/>
            <person name="Auger S."/>
            <person name="Galleron N."/>
            <person name="Segurens B."/>
            <person name="Dossat C."/>
            <person name="Land M.L."/>
            <person name="Broussolle V."/>
            <person name="Brillard J."/>
            <person name="Guinebretiere M.-H."/>
            <person name="Sanchis V."/>
            <person name="Nguen-the C."/>
            <person name="Lereclus D."/>
            <person name="Richardson P."/>
            <person name="Wincker P."/>
            <person name="Weissenbach J."/>
            <person name="Ehrlich S.D."/>
            <person name="Sorokin A."/>
        </authorList>
    </citation>
    <scope>NUCLEOTIDE SEQUENCE [LARGE SCALE GENOMIC DNA]</scope>
    <source>
        <strain>KBAB4</strain>
    </source>
</reference>
<protein>
    <recommendedName>
        <fullName evidence="1">Putative cysteine ligase BshC</fullName>
        <ecNumber evidence="1">6.-.-.-</ecNumber>
    </recommendedName>
</protein>